<dbReference type="EMBL" id="CP000419">
    <property type="protein sequence ID" value="ABJ67096.1"/>
    <property type="molecule type" value="Genomic_DNA"/>
</dbReference>
<dbReference type="RefSeq" id="WP_002947786.1">
    <property type="nucleotide sequence ID" value="NC_008532.1"/>
</dbReference>
<dbReference type="SMR" id="Q03I76"/>
<dbReference type="KEGG" id="ste:STER_1991"/>
<dbReference type="HOGENOM" id="CLU_040267_0_1_9"/>
<dbReference type="GO" id="GO:0005737">
    <property type="term" value="C:cytoplasm"/>
    <property type="evidence" value="ECO:0007669"/>
    <property type="project" value="UniProtKB-SubCell"/>
</dbReference>
<dbReference type="GO" id="GO:0005524">
    <property type="term" value="F:ATP binding"/>
    <property type="evidence" value="ECO:0007669"/>
    <property type="project" value="UniProtKB-UniRule"/>
</dbReference>
<dbReference type="GO" id="GO:0003697">
    <property type="term" value="F:single-stranded DNA binding"/>
    <property type="evidence" value="ECO:0007669"/>
    <property type="project" value="UniProtKB-UniRule"/>
</dbReference>
<dbReference type="GO" id="GO:0006260">
    <property type="term" value="P:DNA replication"/>
    <property type="evidence" value="ECO:0007669"/>
    <property type="project" value="UniProtKB-UniRule"/>
</dbReference>
<dbReference type="GO" id="GO:0000731">
    <property type="term" value="P:DNA synthesis involved in DNA repair"/>
    <property type="evidence" value="ECO:0007669"/>
    <property type="project" value="TreeGrafter"/>
</dbReference>
<dbReference type="GO" id="GO:0006302">
    <property type="term" value="P:double-strand break repair"/>
    <property type="evidence" value="ECO:0007669"/>
    <property type="project" value="TreeGrafter"/>
</dbReference>
<dbReference type="GO" id="GO:0009432">
    <property type="term" value="P:SOS response"/>
    <property type="evidence" value="ECO:0007669"/>
    <property type="project" value="UniProtKB-UniRule"/>
</dbReference>
<dbReference type="CDD" id="cd03242">
    <property type="entry name" value="ABC_RecF"/>
    <property type="match status" value="1"/>
</dbReference>
<dbReference type="Gene3D" id="3.40.50.300">
    <property type="entry name" value="P-loop containing nucleotide triphosphate hydrolases"/>
    <property type="match status" value="1"/>
</dbReference>
<dbReference type="Gene3D" id="1.20.1050.90">
    <property type="entry name" value="RecF/RecN/SMC, N-terminal domain"/>
    <property type="match status" value="1"/>
</dbReference>
<dbReference type="HAMAP" id="MF_00365">
    <property type="entry name" value="RecF"/>
    <property type="match status" value="1"/>
</dbReference>
<dbReference type="InterPro" id="IPR001238">
    <property type="entry name" value="DNA-binding_RecF"/>
</dbReference>
<dbReference type="InterPro" id="IPR018078">
    <property type="entry name" value="DNA-binding_RecF_CS"/>
</dbReference>
<dbReference type="InterPro" id="IPR027417">
    <property type="entry name" value="P-loop_NTPase"/>
</dbReference>
<dbReference type="InterPro" id="IPR003395">
    <property type="entry name" value="RecF/RecN/SMC_N"/>
</dbReference>
<dbReference type="InterPro" id="IPR042174">
    <property type="entry name" value="RecF_2"/>
</dbReference>
<dbReference type="NCBIfam" id="TIGR00611">
    <property type="entry name" value="recf"/>
    <property type="match status" value="1"/>
</dbReference>
<dbReference type="PANTHER" id="PTHR32182">
    <property type="entry name" value="DNA REPLICATION AND REPAIR PROTEIN RECF"/>
    <property type="match status" value="1"/>
</dbReference>
<dbReference type="PANTHER" id="PTHR32182:SF0">
    <property type="entry name" value="DNA REPLICATION AND REPAIR PROTEIN RECF"/>
    <property type="match status" value="1"/>
</dbReference>
<dbReference type="Pfam" id="PF02463">
    <property type="entry name" value="SMC_N"/>
    <property type="match status" value="1"/>
</dbReference>
<dbReference type="SUPFAM" id="SSF52540">
    <property type="entry name" value="P-loop containing nucleoside triphosphate hydrolases"/>
    <property type="match status" value="1"/>
</dbReference>
<dbReference type="PROSITE" id="PS00617">
    <property type="entry name" value="RECF_1"/>
    <property type="match status" value="1"/>
</dbReference>
<dbReference type="PROSITE" id="PS00618">
    <property type="entry name" value="RECF_2"/>
    <property type="match status" value="1"/>
</dbReference>
<evidence type="ECO:0000255" key="1">
    <source>
        <dbReference type="HAMAP-Rule" id="MF_00365"/>
    </source>
</evidence>
<name>RECF_STRTD</name>
<comment type="function">
    <text evidence="1">The RecF protein is involved in DNA metabolism; it is required for DNA replication and normal SOS inducibility. RecF binds preferentially to single-stranded, linear DNA. It also seems to bind ATP.</text>
</comment>
<comment type="subcellular location">
    <subcellularLocation>
        <location evidence="1">Cytoplasm</location>
    </subcellularLocation>
</comment>
<comment type="similarity">
    <text evidence="1">Belongs to the RecF family.</text>
</comment>
<reference key="1">
    <citation type="journal article" date="2006" name="Proc. Natl. Acad. Sci. U.S.A.">
        <title>Comparative genomics of the lactic acid bacteria.</title>
        <authorList>
            <person name="Makarova K.S."/>
            <person name="Slesarev A."/>
            <person name="Wolf Y.I."/>
            <person name="Sorokin A."/>
            <person name="Mirkin B."/>
            <person name="Koonin E.V."/>
            <person name="Pavlov A."/>
            <person name="Pavlova N."/>
            <person name="Karamychev V."/>
            <person name="Polouchine N."/>
            <person name="Shakhova V."/>
            <person name="Grigoriev I."/>
            <person name="Lou Y."/>
            <person name="Rohksar D."/>
            <person name="Lucas S."/>
            <person name="Huang K."/>
            <person name="Goodstein D.M."/>
            <person name="Hawkins T."/>
            <person name="Plengvidhya V."/>
            <person name="Welker D."/>
            <person name="Hughes J."/>
            <person name="Goh Y."/>
            <person name="Benson A."/>
            <person name="Baldwin K."/>
            <person name="Lee J.-H."/>
            <person name="Diaz-Muniz I."/>
            <person name="Dosti B."/>
            <person name="Smeianov V."/>
            <person name="Wechter W."/>
            <person name="Barabote R."/>
            <person name="Lorca G."/>
            <person name="Altermann E."/>
            <person name="Barrangou R."/>
            <person name="Ganesan B."/>
            <person name="Xie Y."/>
            <person name="Rawsthorne H."/>
            <person name="Tamir D."/>
            <person name="Parker C."/>
            <person name="Breidt F."/>
            <person name="Broadbent J.R."/>
            <person name="Hutkins R."/>
            <person name="O'Sullivan D."/>
            <person name="Steele J."/>
            <person name="Unlu G."/>
            <person name="Saier M.H. Jr."/>
            <person name="Klaenhammer T."/>
            <person name="Richardson P."/>
            <person name="Kozyavkin S."/>
            <person name="Weimer B.C."/>
            <person name="Mills D.A."/>
        </authorList>
    </citation>
    <scope>NUCLEOTIDE SEQUENCE [LARGE SCALE GENOMIC DNA]</scope>
    <source>
        <strain>ATCC BAA-491 / LMD-9</strain>
    </source>
</reference>
<feature type="chain" id="PRO_1000048592" description="DNA replication and repair protein RecF">
    <location>
        <begin position="1"/>
        <end position="366"/>
    </location>
</feature>
<feature type="binding site" evidence="1">
    <location>
        <begin position="30"/>
        <end position="37"/>
    </location>
    <ligand>
        <name>ATP</name>
        <dbReference type="ChEBI" id="CHEBI:30616"/>
    </ligand>
</feature>
<protein>
    <recommendedName>
        <fullName evidence="1">DNA replication and repair protein RecF</fullName>
    </recommendedName>
</protein>
<sequence>MWLEKIDIQHFRNYSEASVSFSPHLNIFLGRNAQGKTNILEAIYFLALTRSHRTHLDKELIQFQQNSLKLNGIVHRHSGNLPLEINLSNKGRVTKVNYLKQAKLSDYIGHMTVVLFAPEDLQLVKGSPSLRRKFIDIDLGQIKPVYLSDLSNYNHVLKQRNAYLKSTDKVDINFLSVLDEQLADFGARVIKHRLEFIKQLEEEADGHHSILSNQIERLKISYESNIPIQNSKDIREAFLTTLNQNHKRDIFKKNTGVGPHRDDLKFYINDMNASFGSQGQQRSLILSLKMAEIALIKKVTEEFPILLLDDVMSELDNHRQLKLLESIDEEVQTFMTTTSLDHLSNLPPNLKTFLVKNGTIYEKQVD</sequence>
<gene>
    <name evidence="1" type="primary">recF</name>
    <name type="ordered locus">STER_1991</name>
</gene>
<keyword id="KW-0067">ATP-binding</keyword>
<keyword id="KW-0963">Cytoplasm</keyword>
<keyword id="KW-0227">DNA damage</keyword>
<keyword id="KW-0234">DNA repair</keyword>
<keyword id="KW-0235">DNA replication</keyword>
<keyword id="KW-0238">DNA-binding</keyword>
<keyword id="KW-0547">Nucleotide-binding</keyword>
<keyword id="KW-0742">SOS response</keyword>
<accession>Q03I76</accession>
<proteinExistence type="inferred from homology"/>
<organism>
    <name type="scientific">Streptococcus thermophilus (strain ATCC BAA-491 / LMD-9)</name>
    <dbReference type="NCBI Taxonomy" id="322159"/>
    <lineage>
        <taxon>Bacteria</taxon>
        <taxon>Bacillati</taxon>
        <taxon>Bacillota</taxon>
        <taxon>Bacilli</taxon>
        <taxon>Lactobacillales</taxon>
        <taxon>Streptococcaceae</taxon>
        <taxon>Streptococcus</taxon>
    </lineage>
</organism>